<gene>
    <name type="ordered locus">Suden_1901</name>
</gene>
<comment type="similarity">
    <text evidence="1">Belongs to the UPF0102 family.</text>
</comment>
<feature type="chain" id="PRO_0000336269" description="UPF0102 protein Suden_1901">
    <location>
        <begin position="1"/>
        <end position="109"/>
    </location>
</feature>
<dbReference type="EMBL" id="CP000153">
    <property type="protein sequence ID" value="ABB45175.1"/>
    <property type="molecule type" value="Genomic_DNA"/>
</dbReference>
<dbReference type="RefSeq" id="WP_011373515.1">
    <property type="nucleotide sequence ID" value="NC_007575.1"/>
</dbReference>
<dbReference type="SMR" id="Q30PA6"/>
<dbReference type="STRING" id="326298.Suden_1901"/>
<dbReference type="KEGG" id="tdn:Suden_1901"/>
<dbReference type="eggNOG" id="COG0792">
    <property type="taxonomic scope" value="Bacteria"/>
</dbReference>
<dbReference type="HOGENOM" id="CLU_115353_3_2_7"/>
<dbReference type="OrthoDB" id="9794876at2"/>
<dbReference type="Proteomes" id="UP000002714">
    <property type="component" value="Chromosome"/>
</dbReference>
<dbReference type="GO" id="GO:0003676">
    <property type="term" value="F:nucleic acid binding"/>
    <property type="evidence" value="ECO:0007669"/>
    <property type="project" value="InterPro"/>
</dbReference>
<dbReference type="Gene3D" id="3.40.1350.10">
    <property type="match status" value="1"/>
</dbReference>
<dbReference type="HAMAP" id="MF_00048">
    <property type="entry name" value="UPF0102"/>
    <property type="match status" value="1"/>
</dbReference>
<dbReference type="InterPro" id="IPR011335">
    <property type="entry name" value="Restrct_endonuc-II-like"/>
</dbReference>
<dbReference type="InterPro" id="IPR011856">
    <property type="entry name" value="tRNA_endonuc-like_dom_sf"/>
</dbReference>
<dbReference type="InterPro" id="IPR003509">
    <property type="entry name" value="UPF0102_YraN-like"/>
</dbReference>
<dbReference type="NCBIfam" id="NF009152">
    <property type="entry name" value="PRK12497.2-4"/>
    <property type="match status" value="1"/>
</dbReference>
<dbReference type="PANTHER" id="PTHR34039">
    <property type="entry name" value="UPF0102 PROTEIN YRAN"/>
    <property type="match status" value="1"/>
</dbReference>
<dbReference type="PANTHER" id="PTHR34039:SF1">
    <property type="entry name" value="UPF0102 PROTEIN YRAN"/>
    <property type="match status" value="1"/>
</dbReference>
<dbReference type="Pfam" id="PF02021">
    <property type="entry name" value="UPF0102"/>
    <property type="match status" value="1"/>
</dbReference>
<dbReference type="SUPFAM" id="SSF52980">
    <property type="entry name" value="Restriction endonuclease-like"/>
    <property type="match status" value="1"/>
</dbReference>
<proteinExistence type="inferred from homology"/>
<name>Y1901_SULDN</name>
<sequence>MSRAKGNVAEDRASLFLLENGYMIVDKNFYSRFGEIDIIAYKEEVWHFVEVKSALDYELAVQNITKSKLSKLIKTGDVYLKKNALHVDYMYDAIIVTPENIWHLENITL</sequence>
<organism>
    <name type="scientific">Sulfurimonas denitrificans (strain ATCC 33889 / DSM 1251)</name>
    <name type="common">Thiomicrospira denitrificans (strain ATCC 33889 / DSM 1251)</name>
    <dbReference type="NCBI Taxonomy" id="326298"/>
    <lineage>
        <taxon>Bacteria</taxon>
        <taxon>Pseudomonadati</taxon>
        <taxon>Campylobacterota</taxon>
        <taxon>Epsilonproteobacteria</taxon>
        <taxon>Campylobacterales</taxon>
        <taxon>Sulfurimonadaceae</taxon>
        <taxon>Sulfurimonas</taxon>
    </lineage>
</organism>
<accession>Q30PA6</accession>
<keyword id="KW-1185">Reference proteome</keyword>
<protein>
    <recommendedName>
        <fullName evidence="1">UPF0102 protein Suden_1901</fullName>
    </recommendedName>
</protein>
<reference key="1">
    <citation type="journal article" date="2008" name="Appl. Environ. Microbiol.">
        <title>Genome of the epsilonproteobacterial chemolithoautotroph Sulfurimonas denitrificans.</title>
        <authorList>
            <person name="Sievert S.M."/>
            <person name="Scott K.M."/>
            <person name="Klotz M.G."/>
            <person name="Chain P.S.G."/>
            <person name="Hauser L.J."/>
            <person name="Hemp J."/>
            <person name="Huegler M."/>
            <person name="Land M."/>
            <person name="Lapidus A."/>
            <person name="Larimer F.W."/>
            <person name="Lucas S."/>
            <person name="Malfatti S.A."/>
            <person name="Meyer F."/>
            <person name="Paulsen I.T."/>
            <person name="Ren Q."/>
            <person name="Simon J."/>
            <person name="Bailey K."/>
            <person name="Diaz E."/>
            <person name="Fitzpatrick K.A."/>
            <person name="Glover B."/>
            <person name="Gwatney N."/>
            <person name="Korajkic A."/>
            <person name="Long A."/>
            <person name="Mobberley J.M."/>
            <person name="Pantry S.N."/>
            <person name="Pazder G."/>
            <person name="Peterson S."/>
            <person name="Quintanilla J.D."/>
            <person name="Sprinkle R."/>
            <person name="Stephens J."/>
            <person name="Thomas P."/>
            <person name="Vaughn R."/>
            <person name="Weber M.J."/>
            <person name="Wooten L.L."/>
        </authorList>
    </citation>
    <scope>NUCLEOTIDE SEQUENCE [LARGE SCALE GENOMIC DNA]</scope>
    <source>
        <strain>ATCC 33889 / DSM 1251</strain>
    </source>
</reference>
<evidence type="ECO:0000255" key="1">
    <source>
        <dbReference type="HAMAP-Rule" id="MF_00048"/>
    </source>
</evidence>